<organism>
    <name type="scientific">Acinetobacter baumannii (strain AYE)</name>
    <dbReference type="NCBI Taxonomy" id="509173"/>
    <lineage>
        <taxon>Bacteria</taxon>
        <taxon>Pseudomonadati</taxon>
        <taxon>Pseudomonadota</taxon>
        <taxon>Gammaproteobacteria</taxon>
        <taxon>Moraxellales</taxon>
        <taxon>Moraxellaceae</taxon>
        <taxon>Acinetobacter</taxon>
        <taxon>Acinetobacter calcoaceticus/baumannii complex</taxon>
    </lineage>
</organism>
<comment type="similarity">
    <text evidence="1">Belongs to the UPF0178 family.</text>
</comment>
<accession>B0VDK5</accession>
<name>Y880_ACIBY</name>
<reference key="1">
    <citation type="journal article" date="2008" name="PLoS ONE">
        <title>Comparative analysis of Acinetobacters: three genomes for three lifestyles.</title>
        <authorList>
            <person name="Vallenet D."/>
            <person name="Nordmann P."/>
            <person name="Barbe V."/>
            <person name="Poirel L."/>
            <person name="Mangenot S."/>
            <person name="Bataille E."/>
            <person name="Dossat C."/>
            <person name="Gas S."/>
            <person name="Kreimeyer A."/>
            <person name="Lenoble P."/>
            <person name="Oztas S."/>
            <person name="Poulain J."/>
            <person name="Segurens B."/>
            <person name="Robert C."/>
            <person name="Abergel C."/>
            <person name="Claverie J.-M."/>
            <person name="Raoult D."/>
            <person name="Medigue C."/>
            <person name="Weissenbach J."/>
            <person name="Cruveiller S."/>
        </authorList>
    </citation>
    <scope>NUCLEOTIDE SEQUENCE [LARGE SCALE GENOMIC DNA]</scope>
    <source>
        <strain>AYE</strain>
    </source>
</reference>
<feature type="chain" id="PRO_1000126168" description="UPF0178 protein ABAYE0880">
    <location>
        <begin position="1"/>
        <end position="155"/>
    </location>
</feature>
<feature type="region of interest" description="Disordered" evidence="2">
    <location>
        <begin position="120"/>
        <end position="155"/>
    </location>
</feature>
<sequence>MLPFKLWVDADALPKILREVILRASDRYQLEVIFVANQNVGITPSVRIKSLQVLSGADQADQEIVNRMSENDIVITQDIPLAAQVIEKGGIAIHPRGEVYTTANVKARLHLRDFMDTLRGAGVQTGGPPPISERDKREFSSALDQTILKQKRKTA</sequence>
<proteinExistence type="inferred from homology"/>
<evidence type="ECO:0000255" key="1">
    <source>
        <dbReference type="HAMAP-Rule" id="MF_00489"/>
    </source>
</evidence>
<evidence type="ECO:0000256" key="2">
    <source>
        <dbReference type="SAM" id="MobiDB-lite"/>
    </source>
</evidence>
<dbReference type="EMBL" id="CU459141">
    <property type="protein sequence ID" value="CAM85828.1"/>
    <property type="molecule type" value="Genomic_DNA"/>
</dbReference>
<dbReference type="EnsemblBacteria" id="CAM85828">
    <property type="protein sequence ID" value="CAM85828"/>
    <property type="gene ID" value="ABAYE0880"/>
</dbReference>
<dbReference type="KEGG" id="aby:ABAYE0880"/>
<dbReference type="HOGENOM" id="CLU_106619_2_1_6"/>
<dbReference type="CDD" id="cd18720">
    <property type="entry name" value="PIN_YqxD-like"/>
    <property type="match status" value="1"/>
</dbReference>
<dbReference type="HAMAP" id="MF_00489">
    <property type="entry name" value="UPF0178"/>
    <property type="match status" value="1"/>
</dbReference>
<dbReference type="InterPro" id="IPR003791">
    <property type="entry name" value="UPF0178"/>
</dbReference>
<dbReference type="NCBIfam" id="NF001095">
    <property type="entry name" value="PRK00124.1"/>
    <property type="match status" value="1"/>
</dbReference>
<dbReference type="PANTHER" id="PTHR35146">
    <property type="entry name" value="UPF0178 PROTEIN YAII"/>
    <property type="match status" value="1"/>
</dbReference>
<dbReference type="PANTHER" id="PTHR35146:SF1">
    <property type="entry name" value="UPF0178 PROTEIN YAII"/>
    <property type="match status" value="1"/>
</dbReference>
<dbReference type="Pfam" id="PF02639">
    <property type="entry name" value="DUF188"/>
    <property type="match status" value="1"/>
</dbReference>
<protein>
    <recommendedName>
        <fullName evidence="1">UPF0178 protein ABAYE0880</fullName>
    </recommendedName>
</protein>
<gene>
    <name type="ordered locus">ABAYE0880</name>
</gene>